<protein>
    <recommendedName>
        <fullName evidence="1">Ribosomal protein L11 methyltransferase</fullName>
        <shortName evidence="1">L11 Mtase</shortName>
        <ecNumber evidence="1">2.1.1.-</ecNumber>
    </recommendedName>
</protein>
<feature type="chain" id="PRO_1000212742" description="Ribosomal protein L11 methyltransferase">
    <location>
        <begin position="1"/>
        <end position="328"/>
    </location>
</feature>
<feature type="binding site" evidence="1">
    <location>
        <position position="153"/>
    </location>
    <ligand>
        <name>S-adenosyl-L-methionine</name>
        <dbReference type="ChEBI" id="CHEBI:59789"/>
    </ligand>
</feature>
<feature type="binding site" evidence="1">
    <location>
        <position position="174"/>
    </location>
    <ligand>
        <name>S-adenosyl-L-methionine</name>
        <dbReference type="ChEBI" id="CHEBI:59789"/>
    </ligand>
</feature>
<feature type="binding site" evidence="1">
    <location>
        <position position="196"/>
    </location>
    <ligand>
        <name>S-adenosyl-L-methionine</name>
        <dbReference type="ChEBI" id="CHEBI:59789"/>
    </ligand>
</feature>
<feature type="binding site" evidence="1">
    <location>
        <position position="263"/>
    </location>
    <ligand>
        <name>S-adenosyl-L-methionine</name>
        <dbReference type="ChEBI" id="CHEBI:59789"/>
    </ligand>
</feature>
<proteinExistence type="inferred from homology"/>
<gene>
    <name evidence="1" type="primary">prmA</name>
    <name type="ordered locus">Caur_1839</name>
</gene>
<organism>
    <name type="scientific">Chloroflexus aurantiacus (strain ATCC 29366 / DSM 635 / J-10-fl)</name>
    <dbReference type="NCBI Taxonomy" id="324602"/>
    <lineage>
        <taxon>Bacteria</taxon>
        <taxon>Bacillati</taxon>
        <taxon>Chloroflexota</taxon>
        <taxon>Chloroflexia</taxon>
        <taxon>Chloroflexales</taxon>
        <taxon>Chloroflexineae</taxon>
        <taxon>Chloroflexaceae</taxon>
        <taxon>Chloroflexus</taxon>
    </lineage>
</organism>
<reference key="1">
    <citation type="journal article" date="2011" name="BMC Genomics">
        <title>Complete genome sequence of the filamentous anoxygenic phototrophic bacterium Chloroflexus aurantiacus.</title>
        <authorList>
            <person name="Tang K.H."/>
            <person name="Barry K."/>
            <person name="Chertkov O."/>
            <person name="Dalin E."/>
            <person name="Han C.S."/>
            <person name="Hauser L.J."/>
            <person name="Honchak B.M."/>
            <person name="Karbach L.E."/>
            <person name="Land M.L."/>
            <person name="Lapidus A."/>
            <person name="Larimer F.W."/>
            <person name="Mikhailova N."/>
            <person name="Pitluck S."/>
            <person name="Pierson B.K."/>
            <person name="Blankenship R.E."/>
        </authorList>
    </citation>
    <scope>NUCLEOTIDE SEQUENCE [LARGE SCALE GENOMIC DNA]</scope>
    <source>
        <strain>ATCC 29366 / DSM 635 / J-10-fl</strain>
    </source>
</reference>
<accession>A9WD89</accession>
<comment type="function">
    <text evidence="1">Methylates ribosomal protein L11.</text>
</comment>
<comment type="catalytic activity">
    <reaction evidence="1">
        <text>L-lysyl-[protein] + 3 S-adenosyl-L-methionine = N(6),N(6),N(6)-trimethyl-L-lysyl-[protein] + 3 S-adenosyl-L-homocysteine + 3 H(+)</text>
        <dbReference type="Rhea" id="RHEA:54192"/>
        <dbReference type="Rhea" id="RHEA-COMP:9752"/>
        <dbReference type="Rhea" id="RHEA-COMP:13826"/>
        <dbReference type="ChEBI" id="CHEBI:15378"/>
        <dbReference type="ChEBI" id="CHEBI:29969"/>
        <dbReference type="ChEBI" id="CHEBI:57856"/>
        <dbReference type="ChEBI" id="CHEBI:59789"/>
        <dbReference type="ChEBI" id="CHEBI:61961"/>
    </reaction>
</comment>
<comment type="subcellular location">
    <subcellularLocation>
        <location evidence="1">Cytoplasm</location>
    </subcellularLocation>
</comment>
<comment type="similarity">
    <text evidence="1">Belongs to the methyltransferase superfamily. PrmA family.</text>
</comment>
<sequence length="328" mass="35815">MQTTSWLEIAVEVDPEAVETVSEILARYGYNGGVVVEQSWIAGDEGPEFQYDPNRPVWLRTYLPLDAQAEETRQQIEHALWHVHQIRPLGPIQTRTLAEEDWANAWKQFYPVLRVGERTVIVPSWLEYQPQPNDVVLLLDPGMAFGTGLHPTTRLCLHLLERLVQPGQQVLDLGTGSGILAIAAAKLGAGQVLALDNDPIAVRVAHENVERNQVQDLVTVAEGSLGAGQAMGHWLSGDFGPETPDPTLHDNTPQATFDLIAANLIAKVLVLLAPDLATALKPGGLLISSGIIDVKEAEVVAAFAAVGLQQIERHVEGEWVALVHRRPQ</sequence>
<keyword id="KW-0963">Cytoplasm</keyword>
<keyword id="KW-0489">Methyltransferase</keyword>
<keyword id="KW-1185">Reference proteome</keyword>
<keyword id="KW-0949">S-adenosyl-L-methionine</keyword>
<keyword id="KW-0808">Transferase</keyword>
<evidence type="ECO:0000255" key="1">
    <source>
        <dbReference type="HAMAP-Rule" id="MF_00735"/>
    </source>
</evidence>
<dbReference type="EC" id="2.1.1.-" evidence="1"/>
<dbReference type="EMBL" id="CP000909">
    <property type="protein sequence ID" value="ABY35056.1"/>
    <property type="molecule type" value="Genomic_DNA"/>
</dbReference>
<dbReference type="RefSeq" id="WP_012257710.1">
    <property type="nucleotide sequence ID" value="NC_010175.1"/>
</dbReference>
<dbReference type="RefSeq" id="YP_001635445.1">
    <property type="nucleotide sequence ID" value="NC_010175.1"/>
</dbReference>
<dbReference type="SMR" id="A9WD89"/>
<dbReference type="FunCoup" id="A9WD89">
    <property type="interactions" value="294"/>
</dbReference>
<dbReference type="STRING" id="324602.Caur_1839"/>
<dbReference type="EnsemblBacteria" id="ABY35056">
    <property type="protein sequence ID" value="ABY35056"/>
    <property type="gene ID" value="Caur_1839"/>
</dbReference>
<dbReference type="KEGG" id="cau:Caur_1839"/>
<dbReference type="PATRIC" id="fig|324602.8.peg.2098"/>
<dbReference type="eggNOG" id="COG2264">
    <property type="taxonomic scope" value="Bacteria"/>
</dbReference>
<dbReference type="HOGENOM" id="CLU_049382_0_1_0"/>
<dbReference type="InParanoid" id="A9WD89"/>
<dbReference type="Proteomes" id="UP000002008">
    <property type="component" value="Chromosome"/>
</dbReference>
<dbReference type="GO" id="GO:0005737">
    <property type="term" value="C:cytoplasm"/>
    <property type="evidence" value="ECO:0007669"/>
    <property type="project" value="UniProtKB-SubCell"/>
</dbReference>
<dbReference type="GO" id="GO:0008276">
    <property type="term" value="F:protein methyltransferase activity"/>
    <property type="evidence" value="ECO:0000318"/>
    <property type="project" value="GO_Central"/>
</dbReference>
<dbReference type="GO" id="GO:0016279">
    <property type="term" value="F:protein-lysine N-methyltransferase activity"/>
    <property type="evidence" value="ECO:0007669"/>
    <property type="project" value="RHEA"/>
</dbReference>
<dbReference type="GO" id="GO:0032259">
    <property type="term" value="P:methylation"/>
    <property type="evidence" value="ECO:0007669"/>
    <property type="project" value="UniProtKB-KW"/>
</dbReference>
<dbReference type="CDD" id="cd02440">
    <property type="entry name" value="AdoMet_MTases"/>
    <property type="match status" value="1"/>
</dbReference>
<dbReference type="Gene3D" id="3.40.50.150">
    <property type="entry name" value="Vaccinia Virus protein VP39"/>
    <property type="match status" value="1"/>
</dbReference>
<dbReference type="HAMAP" id="MF_00735">
    <property type="entry name" value="Methyltr_PrmA"/>
    <property type="match status" value="1"/>
</dbReference>
<dbReference type="InterPro" id="IPR050078">
    <property type="entry name" value="Ribosomal_L11_MeTrfase_PrmA"/>
</dbReference>
<dbReference type="InterPro" id="IPR004498">
    <property type="entry name" value="Ribosomal_PrmA_MeTrfase"/>
</dbReference>
<dbReference type="InterPro" id="IPR029063">
    <property type="entry name" value="SAM-dependent_MTases_sf"/>
</dbReference>
<dbReference type="PANTHER" id="PTHR43648">
    <property type="entry name" value="ELECTRON TRANSFER FLAVOPROTEIN BETA SUBUNIT LYSINE METHYLTRANSFERASE"/>
    <property type="match status" value="1"/>
</dbReference>
<dbReference type="PANTHER" id="PTHR43648:SF1">
    <property type="entry name" value="ELECTRON TRANSFER FLAVOPROTEIN BETA SUBUNIT LYSINE METHYLTRANSFERASE"/>
    <property type="match status" value="1"/>
</dbReference>
<dbReference type="Pfam" id="PF06325">
    <property type="entry name" value="PrmA"/>
    <property type="match status" value="1"/>
</dbReference>
<dbReference type="PIRSF" id="PIRSF000401">
    <property type="entry name" value="RPL11_MTase"/>
    <property type="match status" value="1"/>
</dbReference>
<dbReference type="SUPFAM" id="SSF53335">
    <property type="entry name" value="S-adenosyl-L-methionine-dependent methyltransferases"/>
    <property type="match status" value="1"/>
</dbReference>
<name>PRMA_CHLAA</name>